<gene>
    <name evidence="1" type="primary">greA</name>
    <name type="ordered locus">BCAH187_A4512</name>
</gene>
<dbReference type="EMBL" id="CP001177">
    <property type="protein sequence ID" value="ACJ80397.1"/>
    <property type="molecule type" value="Genomic_DNA"/>
</dbReference>
<dbReference type="SMR" id="B7HQD7"/>
<dbReference type="KEGG" id="bcr:BCAH187_A4512"/>
<dbReference type="HOGENOM" id="CLU_101379_2_1_9"/>
<dbReference type="Proteomes" id="UP000002214">
    <property type="component" value="Chromosome"/>
</dbReference>
<dbReference type="GO" id="GO:0003677">
    <property type="term" value="F:DNA binding"/>
    <property type="evidence" value="ECO:0007669"/>
    <property type="project" value="UniProtKB-UniRule"/>
</dbReference>
<dbReference type="GO" id="GO:0070063">
    <property type="term" value="F:RNA polymerase binding"/>
    <property type="evidence" value="ECO:0007669"/>
    <property type="project" value="InterPro"/>
</dbReference>
<dbReference type="GO" id="GO:0006354">
    <property type="term" value="P:DNA-templated transcription elongation"/>
    <property type="evidence" value="ECO:0007669"/>
    <property type="project" value="TreeGrafter"/>
</dbReference>
<dbReference type="GO" id="GO:0032784">
    <property type="term" value="P:regulation of DNA-templated transcription elongation"/>
    <property type="evidence" value="ECO:0007669"/>
    <property type="project" value="UniProtKB-UniRule"/>
</dbReference>
<dbReference type="FunFam" id="1.10.287.180:FF:000001">
    <property type="entry name" value="Transcription elongation factor GreA"/>
    <property type="match status" value="1"/>
</dbReference>
<dbReference type="FunFam" id="3.10.50.30:FF:000001">
    <property type="entry name" value="Transcription elongation factor GreA"/>
    <property type="match status" value="1"/>
</dbReference>
<dbReference type="Gene3D" id="3.10.50.30">
    <property type="entry name" value="Transcription elongation factor, GreA/GreB, C-terminal domain"/>
    <property type="match status" value="1"/>
</dbReference>
<dbReference type="Gene3D" id="1.10.287.180">
    <property type="entry name" value="Transcription elongation factor, GreA/GreB, N-terminal domain"/>
    <property type="match status" value="1"/>
</dbReference>
<dbReference type="HAMAP" id="MF_00105">
    <property type="entry name" value="GreA_GreB"/>
    <property type="match status" value="1"/>
</dbReference>
<dbReference type="InterPro" id="IPR036953">
    <property type="entry name" value="GreA/GreB_C_sf"/>
</dbReference>
<dbReference type="InterPro" id="IPR018151">
    <property type="entry name" value="TF_GreA/GreB_CS"/>
</dbReference>
<dbReference type="InterPro" id="IPR006359">
    <property type="entry name" value="Tscrpt_elong_fac_GreA"/>
</dbReference>
<dbReference type="InterPro" id="IPR028624">
    <property type="entry name" value="Tscrpt_elong_fac_GreA/B"/>
</dbReference>
<dbReference type="InterPro" id="IPR001437">
    <property type="entry name" value="Tscrpt_elong_fac_GreA/B_C"/>
</dbReference>
<dbReference type="InterPro" id="IPR023459">
    <property type="entry name" value="Tscrpt_elong_fac_GreA/B_fam"/>
</dbReference>
<dbReference type="InterPro" id="IPR022691">
    <property type="entry name" value="Tscrpt_elong_fac_GreA/B_N"/>
</dbReference>
<dbReference type="InterPro" id="IPR036805">
    <property type="entry name" value="Tscrpt_elong_fac_GreA/B_N_sf"/>
</dbReference>
<dbReference type="NCBIfam" id="TIGR01462">
    <property type="entry name" value="greA"/>
    <property type="match status" value="1"/>
</dbReference>
<dbReference type="NCBIfam" id="NF001261">
    <property type="entry name" value="PRK00226.1-2"/>
    <property type="match status" value="1"/>
</dbReference>
<dbReference type="NCBIfam" id="NF001263">
    <property type="entry name" value="PRK00226.1-4"/>
    <property type="match status" value="1"/>
</dbReference>
<dbReference type="PANTHER" id="PTHR30437">
    <property type="entry name" value="TRANSCRIPTION ELONGATION FACTOR GREA"/>
    <property type="match status" value="1"/>
</dbReference>
<dbReference type="PANTHER" id="PTHR30437:SF4">
    <property type="entry name" value="TRANSCRIPTION ELONGATION FACTOR GREA"/>
    <property type="match status" value="1"/>
</dbReference>
<dbReference type="Pfam" id="PF01272">
    <property type="entry name" value="GreA_GreB"/>
    <property type="match status" value="1"/>
</dbReference>
<dbReference type="Pfam" id="PF03449">
    <property type="entry name" value="GreA_GreB_N"/>
    <property type="match status" value="1"/>
</dbReference>
<dbReference type="PIRSF" id="PIRSF006092">
    <property type="entry name" value="GreA_GreB"/>
    <property type="match status" value="1"/>
</dbReference>
<dbReference type="SUPFAM" id="SSF54534">
    <property type="entry name" value="FKBP-like"/>
    <property type="match status" value="1"/>
</dbReference>
<dbReference type="SUPFAM" id="SSF46557">
    <property type="entry name" value="GreA transcript cleavage protein, N-terminal domain"/>
    <property type="match status" value="1"/>
</dbReference>
<dbReference type="PROSITE" id="PS00829">
    <property type="entry name" value="GREAB_1"/>
    <property type="match status" value="1"/>
</dbReference>
<dbReference type="PROSITE" id="PS00830">
    <property type="entry name" value="GREAB_2"/>
    <property type="match status" value="1"/>
</dbReference>
<comment type="function">
    <text evidence="1">Necessary for efficient RNA polymerase transcription elongation past template-encoded arresting sites. The arresting sites in DNA have the property of trapping a certain fraction of elongating RNA polymerases that pass through, resulting in locked ternary complexes. Cleavage of the nascent transcript by cleavage factors such as GreA or GreB allows the resumption of elongation from the new 3'terminus. GreA releases sequences of 2 to 3 nucleotides.</text>
</comment>
<comment type="similarity">
    <text evidence="1">Belongs to the GreA/GreB family.</text>
</comment>
<reference key="1">
    <citation type="submission" date="2008-10" db="EMBL/GenBank/DDBJ databases">
        <title>Genome sequence of Bacillus cereus AH187.</title>
        <authorList>
            <person name="Dodson R.J."/>
            <person name="Durkin A.S."/>
            <person name="Rosovitz M.J."/>
            <person name="Rasko D.A."/>
            <person name="Kolsto A.B."/>
            <person name="Okstad O.A."/>
            <person name="Ravel J."/>
            <person name="Sutton G."/>
        </authorList>
    </citation>
    <scope>NUCLEOTIDE SEQUENCE [LARGE SCALE GENOMIC DNA]</scope>
    <source>
        <strain>AH187</strain>
    </source>
</reference>
<sequence>MATEKTYPMTQEGKQKLENELEDLKTVKRKEVVERIKIARSFGDLSENSEYDAAKDEQAFVEGRITQLENMIRNAVIITDNGEESTVVTLGKTVTFKELPDGDEEAYTIVGSAEADPFEGRISNDSPIAKSLLGKQIGEKVAIQTPGGEMQVEIISVK</sequence>
<protein>
    <recommendedName>
        <fullName evidence="1">Transcription elongation factor GreA</fullName>
    </recommendedName>
    <alternativeName>
        <fullName evidence="1">Transcript cleavage factor GreA</fullName>
    </alternativeName>
</protein>
<organism>
    <name type="scientific">Bacillus cereus (strain AH187)</name>
    <dbReference type="NCBI Taxonomy" id="405534"/>
    <lineage>
        <taxon>Bacteria</taxon>
        <taxon>Bacillati</taxon>
        <taxon>Bacillota</taxon>
        <taxon>Bacilli</taxon>
        <taxon>Bacillales</taxon>
        <taxon>Bacillaceae</taxon>
        <taxon>Bacillus</taxon>
        <taxon>Bacillus cereus group</taxon>
    </lineage>
</organism>
<keyword id="KW-0175">Coiled coil</keyword>
<keyword id="KW-0238">DNA-binding</keyword>
<keyword id="KW-0804">Transcription</keyword>
<keyword id="KW-0805">Transcription regulation</keyword>
<evidence type="ECO:0000255" key="1">
    <source>
        <dbReference type="HAMAP-Rule" id="MF_00105"/>
    </source>
</evidence>
<proteinExistence type="inferred from homology"/>
<accession>B7HQD7</accession>
<name>GREA_BACC7</name>
<feature type="chain" id="PRO_1000117404" description="Transcription elongation factor GreA">
    <location>
        <begin position="1"/>
        <end position="158"/>
    </location>
</feature>
<feature type="coiled-coil region" evidence="1">
    <location>
        <begin position="4"/>
        <end position="75"/>
    </location>
</feature>